<protein>
    <recommendedName>
        <fullName evidence="1">4-hydroxy-2-oxo-heptane-1,7-dioate aldolase</fullName>
        <ecNumber evidence="1">4.1.2.52</ecNumber>
    </recommendedName>
    <alternativeName>
        <fullName evidence="1">2,4-dihydroxyhept-2-ene-1,7-dioic acid aldolase</fullName>
        <shortName evidence="1">HHED aldolase</shortName>
    </alternativeName>
    <alternativeName>
        <fullName evidence="1">4-hydroxy-2-ketoheptane-1,7-dioate aldolase</fullName>
        <shortName evidence="1">HKHD aldolase</shortName>
    </alternativeName>
</protein>
<accession>B4T2T9</accession>
<keyword id="KW-0058">Aromatic hydrocarbons catabolism</keyword>
<keyword id="KW-0456">Lyase</keyword>
<keyword id="KW-0479">Metal-binding</keyword>
<organism>
    <name type="scientific">Salmonella newport (strain SL254)</name>
    <dbReference type="NCBI Taxonomy" id="423368"/>
    <lineage>
        <taxon>Bacteria</taxon>
        <taxon>Pseudomonadati</taxon>
        <taxon>Pseudomonadota</taxon>
        <taxon>Gammaproteobacteria</taxon>
        <taxon>Enterobacterales</taxon>
        <taxon>Enterobacteriaceae</taxon>
        <taxon>Salmonella</taxon>
    </lineage>
</organism>
<feature type="chain" id="PRO_1000140425" description="4-hydroxy-2-oxo-heptane-1,7-dioate aldolase">
    <location>
        <begin position="1"/>
        <end position="263"/>
    </location>
</feature>
<feature type="active site" description="Proton acceptor" evidence="1">
    <location>
        <position position="45"/>
    </location>
</feature>
<feature type="binding site" evidence="1">
    <location>
        <position position="147"/>
    </location>
    <ligand>
        <name>substrate</name>
    </ligand>
</feature>
<feature type="binding site" evidence="1">
    <location>
        <position position="149"/>
    </location>
    <ligand>
        <name>a divalent metal cation</name>
        <dbReference type="ChEBI" id="CHEBI:60240"/>
    </ligand>
</feature>
<feature type="binding site" evidence="1">
    <location>
        <position position="174"/>
    </location>
    <ligand>
        <name>substrate</name>
    </ligand>
</feature>
<feature type="binding site" evidence="1">
    <location>
        <position position="175"/>
    </location>
    <ligand>
        <name>a divalent metal cation</name>
        <dbReference type="ChEBI" id="CHEBI:60240"/>
    </ligand>
</feature>
<feature type="binding site" evidence="1">
    <location>
        <position position="175"/>
    </location>
    <ligand>
        <name>substrate</name>
    </ligand>
</feature>
<feature type="site" description="Transition state stabilizer" evidence="1">
    <location>
        <position position="70"/>
    </location>
</feature>
<feature type="site" description="Increases basicity of active site His" evidence="1">
    <location>
        <position position="84"/>
    </location>
</feature>
<dbReference type="EC" id="4.1.2.52" evidence="1"/>
<dbReference type="EMBL" id="CP001113">
    <property type="protein sequence ID" value="ACF61750.1"/>
    <property type="molecule type" value="Genomic_DNA"/>
</dbReference>
<dbReference type="RefSeq" id="WP_000785064.1">
    <property type="nucleotide sequence ID" value="NZ_CCMR01000003.1"/>
</dbReference>
<dbReference type="SMR" id="B4T2T9"/>
<dbReference type="KEGG" id="see:SNSL254_A1201"/>
<dbReference type="HOGENOM" id="CLU_059964_1_0_6"/>
<dbReference type="UniPathway" id="UPA00208">
    <property type="reaction ID" value="UER00422"/>
</dbReference>
<dbReference type="Proteomes" id="UP000008824">
    <property type="component" value="Chromosome"/>
</dbReference>
<dbReference type="GO" id="GO:0005737">
    <property type="term" value="C:cytoplasm"/>
    <property type="evidence" value="ECO:0007669"/>
    <property type="project" value="TreeGrafter"/>
</dbReference>
<dbReference type="GO" id="GO:0043863">
    <property type="term" value="F:4-hydroxy-2-ketopimelate aldolase activity"/>
    <property type="evidence" value="ECO:0007669"/>
    <property type="project" value="RHEA"/>
</dbReference>
<dbReference type="GO" id="GO:0046872">
    <property type="term" value="F:metal ion binding"/>
    <property type="evidence" value="ECO:0007669"/>
    <property type="project" value="UniProtKB-UniRule"/>
</dbReference>
<dbReference type="GO" id="GO:1901023">
    <property type="term" value="P:4-hydroxyphenylacetate catabolic process"/>
    <property type="evidence" value="ECO:0007669"/>
    <property type="project" value="UniProtKB-UniRule"/>
</dbReference>
<dbReference type="GO" id="GO:0010124">
    <property type="term" value="P:phenylacetate catabolic process"/>
    <property type="evidence" value="ECO:0007669"/>
    <property type="project" value="InterPro"/>
</dbReference>
<dbReference type="FunFam" id="3.20.20.60:FF:000004">
    <property type="entry name" value="5-keto-4-deoxy-D-glucarate aldolase"/>
    <property type="match status" value="1"/>
</dbReference>
<dbReference type="Gene3D" id="3.20.20.60">
    <property type="entry name" value="Phosphoenolpyruvate-binding domains"/>
    <property type="match status" value="1"/>
</dbReference>
<dbReference type="HAMAP" id="MF_01292">
    <property type="entry name" value="HKHD_aldolase"/>
    <property type="match status" value="1"/>
</dbReference>
<dbReference type="InterPro" id="IPR005000">
    <property type="entry name" value="Aldolase/citrate-lyase_domain"/>
</dbReference>
<dbReference type="InterPro" id="IPR023701">
    <property type="entry name" value="HKHD_aldolase_ent"/>
</dbReference>
<dbReference type="InterPro" id="IPR012689">
    <property type="entry name" value="HpaI"/>
</dbReference>
<dbReference type="InterPro" id="IPR050251">
    <property type="entry name" value="HpcH-HpaI_aldolase"/>
</dbReference>
<dbReference type="InterPro" id="IPR015813">
    <property type="entry name" value="Pyrv/PenolPyrv_kinase-like_dom"/>
</dbReference>
<dbReference type="InterPro" id="IPR040442">
    <property type="entry name" value="Pyrv_kinase-like_dom_sf"/>
</dbReference>
<dbReference type="NCBIfam" id="TIGR02311">
    <property type="entry name" value="HpaI"/>
    <property type="match status" value="1"/>
</dbReference>
<dbReference type="PANTHER" id="PTHR30502">
    <property type="entry name" value="2-KETO-3-DEOXY-L-RHAMNONATE ALDOLASE"/>
    <property type="match status" value="1"/>
</dbReference>
<dbReference type="PANTHER" id="PTHR30502:SF0">
    <property type="entry name" value="PHOSPHOENOLPYRUVATE CARBOXYLASE FAMILY PROTEIN"/>
    <property type="match status" value="1"/>
</dbReference>
<dbReference type="Pfam" id="PF03328">
    <property type="entry name" value="HpcH_HpaI"/>
    <property type="match status" value="1"/>
</dbReference>
<dbReference type="SUPFAM" id="SSF51621">
    <property type="entry name" value="Phosphoenolpyruvate/pyruvate domain"/>
    <property type="match status" value="1"/>
</dbReference>
<comment type="function">
    <text evidence="1">Catalyzes the reversible retro-aldol cleavage of 4-hydroxy-2-ketoheptane-1,7-dioate (HKHD) to pyruvate and succinic semialdehyde.</text>
</comment>
<comment type="catalytic activity">
    <reaction evidence="1">
        <text>4-hydroxy-2-oxoheptanedioate = succinate semialdehyde + pyruvate</text>
        <dbReference type="Rhea" id="RHEA:25788"/>
        <dbReference type="ChEBI" id="CHEBI:15361"/>
        <dbReference type="ChEBI" id="CHEBI:57706"/>
        <dbReference type="ChEBI" id="CHEBI:73036"/>
        <dbReference type="EC" id="4.1.2.52"/>
    </reaction>
</comment>
<comment type="cofactor">
    <cofactor evidence="1">
        <name>a divalent metal cation</name>
        <dbReference type="ChEBI" id="CHEBI:60240"/>
    </cofactor>
    <text evidence="1">Binds 1 divalent metal cation per subunit.</text>
</comment>
<comment type="pathway">
    <text evidence="1">Aromatic compound metabolism; 4-hydroxyphenylacetate degradation; pyruvate and succinate semialdehyde from 4-hydroxyphenylacetate: step 7/7.</text>
</comment>
<comment type="subunit">
    <text evidence="1">Homohexamer; trimer of dimers.</text>
</comment>
<comment type="similarity">
    <text evidence="1">Belongs to the HpcH/HpaI aldolase family.</text>
</comment>
<sequence>MKNAFKDALKAGRPQIGLWLGLANSYSAELLAGAGFDWLLIDGEHAPNNVQTVLTQLQAIAPYPSQPVVRPSWNDPVQIKQLLDVGAQTLLIPMVQNADEARNAVAATRYPPAGIRGVGSALARASRWNRIPDYLHQANDAMCVLVQIETREAMSNLASILDVDGIDGVFIGPADLSADMGFAGNPQHPEVQAAIENAIVQIRAAGKAPGILMANEALAKRYLELGALFVAVGVDTTLLARGAEALAARFGVEKKLSGASGVY</sequence>
<name>HPCH_SALNS</name>
<reference key="1">
    <citation type="journal article" date="2011" name="J. Bacteriol.">
        <title>Comparative genomics of 28 Salmonella enterica isolates: evidence for CRISPR-mediated adaptive sublineage evolution.</title>
        <authorList>
            <person name="Fricke W.F."/>
            <person name="Mammel M.K."/>
            <person name="McDermott P.F."/>
            <person name="Tartera C."/>
            <person name="White D.G."/>
            <person name="Leclerc J.E."/>
            <person name="Ravel J."/>
            <person name="Cebula T.A."/>
        </authorList>
    </citation>
    <scope>NUCLEOTIDE SEQUENCE [LARGE SCALE GENOMIC DNA]</scope>
    <source>
        <strain>SL254</strain>
    </source>
</reference>
<gene>
    <name evidence="1" type="primary">hpcH</name>
    <name evidence="1" type="synonym">hpaI</name>
    <name type="ordered locus">SNSL254_A1201</name>
</gene>
<evidence type="ECO:0000255" key="1">
    <source>
        <dbReference type="HAMAP-Rule" id="MF_01292"/>
    </source>
</evidence>
<proteinExistence type="inferred from homology"/>